<proteinExistence type="inferred from homology"/>
<dbReference type="EMBL" id="AP009179">
    <property type="protein sequence ID" value="BAF71275.1"/>
    <property type="molecule type" value="Genomic_DNA"/>
</dbReference>
<dbReference type="RefSeq" id="WP_011980008.1">
    <property type="nucleotide sequence ID" value="NC_009663.1"/>
</dbReference>
<dbReference type="SMR" id="A6Q716"/>
<dbReference type="STRING" id="387093.SUN_0315"/>
<dbReference type="KEGG" id="sun:SUN_0315"/>
<dbReference type="eggNOG" id="COG0264">
    <property type="taxonomic scope" value="Bacteria"/>
</dbReference>
<dbReference type="HOGENOM" id="CLU_047155_0_1_7"/>
<dbReference type="OrthoDB" id="9808348at2"/>
<dbReference type="Proteomes" id="UP000006378">
    <property type="component" value="Chromosome"/>
</dbReference>
<dbReference type="GO" id="GO:0005737">
    <property type="term" value="C:cytoplasm"/>
    <property type="evidence" value="ECO:0007669"/>
    <property type="project" value="UniProtKB-SubCell"/>
</dbReference>
<dbReference type="GO" id="GO:0003746">
    <property type="term" value="F:translation elongation factor activity"/>
    <property type="evidence" value="ECO:0007669"/>
    <property type="project" value="UniProtKB-UniRule"/>
</dbReference>
<dbReference type="CDD" id="cd14275">
    <property type="entry name" value="UBA_EF-Ts"/>
    <property type="match status" value="1"/>
</dbReference>
<dbReference type="FunFam" id="1.10.286.20:FF:000004">
    <property type="entry name" value="Elongation factor Ts"/>
    <property type="match status" value="1"/>
</dbReference>
<dbReference type="FunFam" id="1.10.8.10:FF:000001">
    <property type="entry name" value="Elongation factor Ts"/>
    <property type="match status" value="1"/>
</dbReference>
<dbReference type="Gene3D" id="1.10.286.20">
    <property type="match status" value="1"/>
</dbReference>
<dbReference type="Gene3D" id="1.10.8.10">
    <property type="entry name" value="DNA helicase RuvA subunit, C-terminal domain"/>
    <property type="match status" value="1"/>
</dbReference>
<dbReference type="Gene3D" id="3.30.479.20">
    <property type="entry name" value="Elongation factor Ts, dimerisation domain"/>
    <property type="match status" value="2"/>
</dbReference>
<dbReference type="HAMAP" id="MF_00050">
    <property type="entry name" value="EF_Ts"/>
    <property type="match status" value="1"/>
</dbReference>
<dbReference type="InterPro" id="IPR036402">
    <property type="entry name" value="EF-Ts_dimer_sf"/>
</dbReference>
<dbReference type="InterPro" id="IPR001816">
    <property type="entry name" value="Transl_elong_EFTs/EF1B"/>
</dbReference>
<dbReference type="InterPro" id="IPR014039">
    <property type="entry name" value="Transl_elong_EFTs/EF1B_dimer"/>
</dbReference>
<dbReference type="InterPro" id="IPR018101">
    <property type="entry name" value="Transl_elong_Ts_CS"/>
</dbReference>
<dbReference type="InterPro" id="IPR009060">
    <property type="entry name" value="UBA-like_sf"/>
</dbReference>
<dbReference type="NCBIfam" id="TIGR00116">
    <property type="entry name" value="tsf"/>
    <property type="match status" value="1"/>
</dbReference>
<dbReference type="PANTHER" id="PTHR11741">
    <property type="entry name" value="ELONGATION FACTOR TS"/>
    <property type="match status" value="1"/>
</dbReference>
<dbReference type="PANTHER" id="PTHR11741:SF0">
    <property type="entry name" value="ELONGATION FACTOR TS, MITOCHONDRIAL"/>
    <property type="match status" value="1"/>
</dbReference>
<dbReference type="Pfam" id="PF00889">
    <property type="entry name" value="EF_TS"/>
    <property type="match status" value="2"/>
</dbReference>
<dbReference type="SUPFAM" id="SSF54713">
    <property type="entry name" value="Elongation factor Ts (EF-Ts), dimerisation domain"/>
    <property type="match status" value="3"/>
</dbReference>
<dbReference type="SUPFAM" id="SSF46934">
    <property type="entry name" value="UBA-like"/>
    <property type="match status" value="1"/>
</dbReference>
<dbReference type="PROSITE" id="PS01126">
    <property type="entry name" value="EF_TS_1"/>
    <property type="match status" value="1"/>
</dbReference>
<dbReference type="PROSITE" id="PS01127">
    <property type="entry name" value="EF_TS_2"/>
    <property type="match status" value="1"/>
</dbReference>
<accession>A6Q716</accession>
<gene>
    <name evidence="1" type="primary">tsf</name>
    <name type="ordered locus">SUN_0315</name>
</gene>
<sequence>MANFGPKDIKKLREMTDAGMMDCKKALTEADGDMDKAVEWLRDQGMGAAAKKAGKVAAEGAIGIKVEGHKAVIVEINSQTDFVAQNDKFKALMDTVVNHAFENNLADAEAINNSTINGEPFADFLSQQIAIIGEKLVVRRAALIVGDETTAVNGYVHSNAQNGVIIEAKCDSAKTAEAMTPVLKEVAMHAAAMAPSTLSFKDFDPKFVEDETKGRIVAIETENEELRRLGKTEKNVPQYISMSQLTDEVMAAAEEALKAELAAEGKPEKIWDKILPGKLARFISDNTTLDQEQCLLDQKFVMDDSKTVFEYVQEKAKAAGGSAEIVHFVRLEVGEGIEVEEEDFAAEVAKQMA</sequence>
<evidence type="ECO:0000255" key="1">
    <source>
        <dbReference type="HAMAP-Rule" id="MF_00050"/>
    </source>
</evidence>
<keyword id="KW-0963">Cytoplasm</keyword>
<keyword id="KW-0251">Elongation factor</keyword>
<keyword id="KW-0648">Protein biosynthesis</keyword>
<comment type="function">
    <text evidence="1">Associates with the EF-Tu.GDP complex and induces the exchange of GDP to GTP. It remains bound to the aminoacyl-tRNA.EF-Tu.GTP complex up to the GTP hydrolysis stage on the ribosome.</text>
</comment>
<comment type="subcellular location">
    <subcellularLocation>
        <location evidence="1">Cytoplasm</location>
    </subcellularLocation>
</comment>
<comment type="similarity">
    <text evidence="1">Belongs to the EF-Ts family.</text>
</comment>
<reference key="1">
    <citation type="journal article" date="2007" name="Proc. Natl. Acad. Sci. U.S.A.">
        <title>Deep-sea vent epsilon-proteobacterial genomes provide insights into emergence of pathogens.</title>
        <authorList>
            <person name="Nakagawa S."/>
            <person name="Takaki Y."/>
            <person name="Shimamura S."/>
            <person name="Reysenbach A.-L."/>
            <person name="Takai K."/>
            <person name="Horikoshi K."/>
        </authorList>
    </citation>
    <scope>NUCLEOTIDE SEQUENCE [LARGE SCALE GENOMIC DNA]</scope>
    <source>
        <strain>NBC37-1</strain>
    </source>
</reference>
<feature type="chain" id="PRO_1000006196" description="Elongation factor Ts">
    <location>
        <begin position="1"/>
        <end position="353"/>
    </location>
</feature>
<feature type="region of interest" description="Involved in Mg(2+) ion dislocation from EF-Tu" evidence="1">
    <location>
        <begin position="80"/>
        <end position="83"/>
    </location>
</feature>
<name>EFTS_SULNB</name>
<protein>
    <recommendedName>
        <fullName evidence="1">Elongation factor Ts</fullName>
        <shortName evidence="1">EF-Ts</shortName>
    </recommendedName>
</protein>
<organism>
    <name type="scientific">Sulfurovum sp. (strain NBC37-1)</name>
    <dbReference type="NCBI Taxonomy" id="387093"/>
    <lineage>
        <taxon>Bacteria</taxon>
        <taxon>Pseudomonadati</taxon>
        <taxon>Campylobacterota</taxon>
        <taxon>Epsilonproteobacteria</taxon>
        <taxon>Campylobacterales</taxon>
        <taxon>Sulfurovaceae</taxon>
        <taxon>Sulfurovum</taxon>
    </lineage>
</organism>